<proteinExistence type="evidence at transcript level"/>
<keyword id="KW-0017">Alkaloid metabolism</keyword>
<keyword id="KW-0150">Chloroplast</keyword>
<keyword id="KW-0456">Lyase</keyword>
<keyword id="KW-0934">Plastid</keyword>
<keyword id="KW-0663">Pyridoxal phosphate</keyword>
<keyword id="KW-1185">Reference proteome</keyword>
<keyword id="KW-0809">Transit peptide</keyword>
<feature type="transit peptide" description="Chloroplast" evidence="5">
    <location>
        <begin position="1"/>
        <end status="unknown"/>
    </location>
</feature>
<feature type="chain" id="PRO_0000455776" description="Ornithine decarboxylase 1B, chloroplastic">
    <location>
        <begin status="unknown"/>
        <end position="433"/>
    </location>
</feature>
<feature type="active site" description="Proton donor; shared with dimeric partner" evidence="4">
    <location>
        <position position="378"/>
    </location>
</feature>
<feature type="binding site" evidence="4">
    <location>
        <position position="228"/>
    </location>
    <ligand>
        <name>pyridoxal 5'-phosphate</name>
        <dbReference type="ChEBI" id="CHEBI:597326"/>
    </ligand>
</feature>
<feature type="binding site" evidence="4">
    <location>
        <position position="266"/>
    </location>
    <ligand>
        <name>pyridoxal 5'-phosphate</name>
        <dbReference type="ChEBI" id="CHEBI:597326"/>
    </ligand>
</feature>
<feature type="binding site" evidence="4">
    <location>
        <begin position="299"/>
        <end position="302"/>
    </location>
    <ligand>
        <name>pyridoxal 5'-phosphate</name>
        <dbReference type="ChEBI" id="CHEBI:597326"/>
    </ligand>
</feature>
<feature type="binding site" description="in other chain" evidence="3">
    <location>
        <begin position="342"/>
        <end position="343"/>
    </location>
    <ligand>
        <name>substrate</name>
        <note>ligand shared between dimeric partners</note>
    </ligand>
</feature>
<feature type="binding site" evidence="3">
    <location>
        <position position="379"/>
    </location>
    <ligand>
        <name>substrate</name>
        <note>ligand shared between dimeric partners</note>
    </ligand>
</feature>
<feature type="binding site" evidence="4">
    <location>
        <position position="407"/>
    </location>
    <ligand>
        <name>pyridoxal 5'-phosphate</name>
        <dbReference type="ChEBI" id="CHEBI:597326"/>
    </ligand>
</feature>
<feature type="site" description="Stacks against the aromatic ring of pyridoxal phosphate and stabilizes reaction intermediates" evidence="2">
    <location>
        <position position="225"/>
    </location>
</feature>
<feature type="modified residue" description="N6-(pyridoxal phosphate)lysine" evidence="4">
    <location>
        <position position="96"/>
    </location>
</feature>
<feature type="sequence conflict" description="In Ref. 3; AAQ14852." evidence="15" ref="3">
    <original>LL</original>
    <variation>SV</variation>
    <location>
        <begin position="179"/>
        <end position="180"/>
    </location>
</feature>
<feature type="sequence conflict" description="In Ref. 3; AAQ14852." evidence="15" ref="3">
    <original>CP</original>
    <variation>SA</variation>
    <location>
        <begin position="192"/>
        <end position="193"/>
    </location>
</feature>
<gene>
    <name evidence="10" type="primary">ODC1B</name>
    <name evidence="9" type="synonym">C308</name>
    <name evidence="11 12 13 14" type="synonym">ODC</name>
    <name type="synonym">ODC2</name>
    <name type="ORF">LOC107815922</name>
</gene>
<accession>P93351</accession>
<accession>Q40594</accession>
<accession>Q71S27</accession>
<protein>
    <recommendedName>
        <fullName evidence="10">Ornithine decarboxylase 1B, chloroplastic</fullName>
        <shortName evidence="14">Nt-ODC</shortName>
        <ecNumber evidence="4">4.1.1.17</ecNumber>
    </recommendedName>
</protein>
<comment type="function">
    <text evidence="4 6 7">Involved in the biosynthesis of pyridine alkaloid natural products, leading mainly to the production of anabasine, anatabine, nicotine and nornicotine, effective deterrents against herbivores with antiparasitic and pesticide properties (neurotoxins); nornicotine serves as the precursor in the synthesis of the carcinogen compound N'-nitrosonornicotine (NNN) (PubMed:27126795, PubMed:32242247). Catalyzes the first and rate-limiting step of polyamine biosynthesis that converts ornithine into putrescine, which is the precursor for the polyamines, spermidine and spermine (By similarity). Polyamines are essential for cell proliferation and are implicated in cellular processes, ranging from DNA replication to apoptosis (By similarity).</text>
</comment>
<comment type="catalytic activity">
    <reaction evidence="4">
        <text>L-ornithine + H(+) = putrescine + CO2</text>
        <dbReference type="Rhea" id="RHEA:22964"/>
        <dbReference type="ChEBI" id="CHEBI:15378"/>
        <dbReference type="ChEBI" id="CHEBI:16526"/>
        <dbReference type="ChEBI" id="CHEBI:46911"/>
        <dbReference type="ChEBI" id="CHEBI:326268"/>
        <dbReference type="EC" id="4.1.1.17"/>
    </reaction>
</comment>
<comment type="cofactor">
    <cofactor evidence="4">
        <name>pyridoxal 5'-phosphate</name>
        <dbReference type="ChEBI" id="CHEBI:597326"/>
    </cofactor>
</comment>
<comment type="pathway">
    <text evidence="7">Alkaloid biosynthesis; nicotine biosynthesis.</text>
</comment>
<comment type="pathway">
    <text evidence="1">Amine and polyamine biosynthesis; putrescine biosynthesis via L-ornithine pathway; putrescine from L-ornithine: step 1/1.</text>
</comment>
<comment type="subunit">
    <text evidence="4">Homodimer (By similarity). Only the dimer is catalytically active, as the active sites are constructed of residues from both monomers (By similarity).</text>
</comment>
<comment type="subcellular location">
    <subcellularLocation>
        <location evidence="5">Plastid</location>
        <location evidence="5">Chloroplast</location>
    </subcellularLocation>
</comment>
<comment type="induction">
    <text evidence="8">Accumulates transiently in response to jasmonic acid (MeJA).</text>
</comment>
<comment type="disruption phenotype">
    <text evidence="6 7">Reduced alkaloids and nicotin levels associated with a lower putrescine production (PubMed:32242247). Occasionally, an early senescence and a lower viability of the older leaves is observed (PubMed:32242247). Plants lacking both ODC1A and ODC1B have lower concentrations of nicotine and nornicotine as well as of polyamines (putrescine, spermidine and spermine), tyramine and phenolamides (caffeoylputrescine and dicaffeoylspermidine), but significantly higher levels of anatabine and of amino acids ornithine, arginine, aspartate, glutamate and glutamine; these phenotypes are associated with reduced plant growth and vigor, and are exacerbated by wounding and shoot apex removal (PubMed:27126795).</text>
</comment>
<comment type="similarity">
    <text evidence="15">Belongs to the Orn/Lys/Arg decarboxylase class-II family.</text>
</comment>
<sequence>MAGQTIIVSGLNPAAILQSTIGGGASPTAAAAAENGTRKVIPLSRDALQDFMLSIITQKLQDEKQPFYVLDLGEVVSLMDQWKSALPNIRPFYAVKCNPEPSFLSILSAMGSNFDCASRAEIEYVLSLGISPDRIVFANPCKPESDIIFAAKVGVNLTTYDSEDEVYKIRKHHPKSELLLRIKPMLDGNARCPMGPKYGALPEEVDPLLRAAQAARLTVSGVSFHIGSGDADSNAYLGAIAAAKEVFETAAKLGMSKMTVLDVGGGFTSGHQFTTAAVAVKSALKQHFDDEPELTIIAEPGRFFAETAFTLATTIIGKRVRGELREYWINDGLYGSMNCVLYDHATVNATPLAVLSNRSNVTCGGSKTFPTTVFGPTCDALDTVLRDYQLPELQVNDWLVFPNMGAYTKAAGSNFNGFNTSAIVTHLAYSYPS</sequence>
<dbReference type="EC" id="4.1.1.17" evidence="4"/>
<dbReference type="EMBL" id="D89984">
    <property type="protein sequence ID" value="BAA14049.1"/>
    <property type="molecule type" value="mRNA"/>
</dbReference>
<dbReference type="EMBL" id="AF127242">
    <property type="protein sequence ID" value="AAF42973.1"/>
    <property type="molecule type" value="mRNA"/>
</dbReference>
<dbReference type="EMBL" id="AF321138">
    <property type="protein sequence ID" value="AAQ14852.1"/>
    <property type="molecule type" value="mRNA"/>
</dbReference>
<dbReference type="EMBL" id="AF233849">
    <property type="protein sequence ID" value="AAK13622.1"/>
    <property type="molecule type" value="Genomic_DNA"/>
</dbReference>
<dbReference type="EMBL" id="U59812">
    <property type="protein sequence ID" value="AAB65826.1"/>
    <property type="molecule type" value="mRNA"/>
</dbReference>
<dbReference type="PIR" id="T03035">
    <property type="entry name" value="T03035"/>
</dbReference>
<dbReference type="RefSeq" id="NP_001312894.1">
    <property type="nucleotide sequence ID" value="NM_001325965.1"/>
</dbReference>
<dbReference type="SMR" id="P93351"/>
<dbReference type="STRING" id="4097.P93351"/>
<dbReference type="PaxDb" id="4097-P93351"/>
<dbReference type="GeneID" id="107815922"/>
<dbReference type="KEGG" id="nta:107815922"/>
<dbReference type="OMA" id="SFDCASQ"/>
<dbReference type="OrthoDB" id="5034579at2759"/>
<dbReference type="UniPathway" id="UPA00107"/>
<dbReference type="UniPathway" id="UPA00535">
    <property type="reaction ID" value="UER00288"/>
</dbReference>
<dbReference type="Proteomes" id="UP000084051">
    <property type="component" value="Unplaced"/>
</dbReference>
<dbReference type="GO" id="GO:0009507">
    <property type="term" value="C:chloroplast"/>
    <property type="evidence" value="ECO:0007669"/>
    <property type="project" value="UniProtKB-SubCell"/>
</dbReference>
<dbReference type="GO" id="GO:0005737">
    <property type="term" value="C:cytoplasm"/>
    <property type="evidence" value="ECO:0000318"/>
    <property type="project" value="GO_Central"/>
</dbReference>
<dbReference type="GO" id="GO:0004586">
    <property type="term" value="F:ornithine decarboxylase activity"/>
    <property type="evidence" value="ECO:0000318"/>
    <property type="project" value="GO_Central"/>
</dbReference>
<dbReference type="GO" id="GO:0009820">
    <property type="term" value="P:alkaloid metabolic process"/>
    <property type="evidence" value="ECO:0007669"/>
    <property type="project" value="UniProtKB-KW"/>
</dbReference>
<dbReference type="GO" id="GO:0042179">
    <property type="term" value="P:nicotine biosynthetic process"/>
    <property type="evidence" value="ECO:0007669"/>
    <property type="project" value="UniProtKB-UniPathway"/>
</dbReference>
<dbReference type="GO" id="GO:0033387">
    <property type="term" value="P:putrescine biosynthetic process from arginine, via ornithine"/>
    <property type="evidence" value="ECO:0000318"/>
    <property type="project" value="GO_Central"/>
</dbReference>
<dbReference type="GO" id="GO:0009753">
    <property type="term" value="P:response to jasmonic acid"/>
    <property type="evidence" value="ECO:0000270"/>
    <property type="project" value="UniProtKB"/>
</dbReference>
<dbReference type="CDD" id="cd00622">
    <property type="entry name" value="PLPDE_III_ODC"/>
    <property type="match status" value="1"/>
</dbReference>
<dbReference type="FunFam" id="3.20.20.10:FF:000005">
    <property type="entry name" value="Ornithine decarboxylase"/>
    <property type="match status" value="1"/>
</dbReference>
<dbReference type="Gene3D" id="3.20.20.10">
    <property type="entry name" value="Alanine racemase"/>
    <property type="match status" value="1"/>
</dbReference>
<dbReference type="Gene3D" id="2.40.37.10">
    <property type="entry name" value="Lyase, Ornithine Decarboxylase, Chain A, domain 1"/>
    <property type="match status" value="1"/>
</dbReference>
<dbReference type="InterPro" id="IPR009006">
    <property type="entry name" value="Ala_racemase/Decarboxylase_C"/>
</dbReference>
<dbReference type="InterPro" id="IPR022643">
    <property type="entry name" value="De-COase2_C"/>
</dbReference>
<dbReference type="InterPro" id="IPR022657">
    <property type="entry name" value="De-COase2_CS"/>
</dbReference>
<dbReference type="InterPro" id="IPR022644">
    <property type="entry name" value="De-COase2_N"/>
</dbReference>
<dbReference type="InterPro" id="IPR022653">
    <property type="entry name" value="De-COase2_pyr-phos_BS"/>
</dbReference>
<dbReference type="InterPro" id="IPR000183">
    <property type="entry name" value="Orn/DAP/Arg_de-COase"/>
</dbReference>
<dbReference type="InterPro" id="IPR002433">
    <property type="entry name" value="Orn_de-COase"/>
</dbReference>
<dbReference type="InterPro" id="IPR029066">
    <property type="entry name" value="PLP-binding_barrel"/>
</dbReference>
<dbReference type="PANTHER" id="PTHR11482">
    <property type="entry name" value="ARGININE/DIAMINOPIMELATE/ORNITHINE DECARBOXYLASE"/>
    <property type="match status" value="1"/>
</dbReference>
<dbReference type="PANTHER" id="PTHR11482:SF6">
    <property type="entry name" value="ORNITHINE DECARBOXYLASE 1-RELATED"/>
    <property type="match status" value="1"/>
</dbReference>
<dbReference type="Pfam" id="PF02784">
    <property type="entry name" value="Orn_Arg_deC_N"/>
    <property type="match status" value="1"/>
</dbReference>
<dbReference type="Pfam" id="PF00278">
    <property type="entry name" value="Orn_DAP_Arg_deC"/>
    <property type="match status" value="1"/>
</dbReference>
<dbReference type="PRINTS" id="PR01179">
    <property type="entry name" value="ODADCRBXLASE"/>
</dbReference>
<dbReference type="PRINTS" id="PR01182">
    <property type="entry name" value="ORNDCRBXLASE"/>
</dbReference>
<dbReference type="SUPFAM" id="SSF50621">
    <property type="entry name" value="Alanine racemase C-terminal domain-like"/>
    <property type="match status" value="1"/>
</dbReference>
<dbReference type="SUPFAM" id="SSF51419">
    <property type="entry name" value="PLP-binding barrel"/>
    <property type="match status" value="1"/>
</dbReference>
<dbReference type="PROSITE" id="PS00878">
    <property type="entry name" value="ODR_DC_2_1"/>
    <property type="match status" value="1"/>
</dbReference>
<dbReference type="PROSITE" id="PS00879">
    <property type="entry name" value="ODR_DC_2_2"/>
    <property type="match status" value="1"/>
</dbReference>
<name>ODC1B_TOBAC</name>
<reference key="1">
    <citation type="journal article" date="1998" name="Plant Mol. Biol.">
        <title>Differential induction by methyl jasmonate of genes encoding ornithine decarboxylase and other enzymes involved in nicotine biosynthesis in tobacco cell cultures.</title>
        <authorList>
            <person name="Imanishi S."/>
            <person name="Hashizume K."/>
            <person name="Nakakita M."/>
            <person name="Kojima H."/>
            <person name="Matsubayashi Y."/>
            <person name="Hashimoto T."/>
            <person name="Sakagami Y."/>
            <person name="Yamada Y."/>
            <person name="Nakamura K."/>
        </authorList>
    </citation>
    <scope>NUCLEOTIDE SEQUENCE [MRNA]</scope>
    <scope>INDUCTION BY JASMONATE</scope>
    <source>
        <strain>cv. Bright Yellow 2</strain>
    </source>
</reference>
<reference key="2">
    <citation type="submission" date="1999-02" db="EMBL/GenBank/DDBJ databases">
        <title>Cloning and characterization of a cDNA encoding ornithine decarboxylase, a key enzyme in polyamine and alkaloid biosynthesis in Nicotiana tabacum L.</title>
        <authorList>
            <person name="Wang J."/>
            <person name="Timko M.P."/>
        </authorList>
    </citation>
    <scope>NUCLEOTIDE SEQUENCE [MRNA]</scope>
    <source>
        <strain>cv. Burley 21</strain>
        <tissue>Root</tissue>
    </source>
</reference>
<reference key="3">
    <citation type="submission" date="2000-11" db="EMBL/GenBank/DDBJ databases">
        <title>Nicotiana tabacum cDNA for ornithine decarboxylase.</title>
        <authorList>
            <person name="Cordeiro A.F."/>
        </authorList>
    </citation>
    <scope>NUCLEOTIDE SEQUENCE [MRNA]</scope>
    <source>
        <strain>cv. SR1</strain>
    </source>
</reference>
<reference key="4">
    <citation type="journal article" date="2004" name="Plant Growth Regul.">
        <title>Differential induction of ornithine decarboxylase (ODC) gene family members in transgenic tobacco (Nicotiana tabacum L. cv. Bright Yellow 2) cell suspensions by methyl-jasmonate treatment.</title>
        <authorList>
            <person name="Xu B."/>
            <person name="Sheehan M.J."/>
            <person name="Timko M.P."/>
        </authorList>
    </citation>
    <scope>NUCLEOTIDE SEQUENCE [GENOMIC DNA]</scope>
    <source>
        <strain>cv. Burley 21</strain>
    </source>
</reference>
<reference key="5">
    <citation type="journal article" date="2014" name="Nat. Commun.">
        <title>The tobacco genome sequence and its comparison with those of tomato and potato.</title>
        <authorList>
            <person name="Sierro N."/>
            <person name="Battey J.N."/>
            <person name="Ouadi S."/>
            <person name="Bakaher N."/>
            <person name="Bovet L."/>
            <person name="Willig A."/>
            <person name="Goepfert S."/>
            <person name="Peitsch M.C."/>
            <person name="Ivanov N.V."/>
        </authorList>
    </citation>
    <scope>NUCLEOTIDE SEQUENCE [LARGE SCALE GENOMIC DNA]</scope>
    <source>
        <strain>cv. TN90</strain>
    </source>
</reference>
<reference key="6">
    <citation type="journal article" date="1996" name="J. Plant Biochem. Biotechnol.">
        <title>A tobacco ornithine decarboxylase partial cDNA clone.</title>
        <authorList>
            <person name="Malik V."/>
            <person name="Watson M.G."/>
            <person name="Malmberg R.L."/>
        </authorList>
    </citation>
    <scope>NUCLEOTIDE SEQUENCE [MRNA] OF 191-433</scope>
</reference>
<reference key="7">
    <citation type="journal article" date="2007" name="Phytochemistry">
        <title>Functional characterisation of genes involved in pyridine alkaloid biosynthesis in tobacco.</title>
        <authorList>
            <person name="Haekkinen S.T."/>
            <person name="Tilleman S."/>
            <person name="Swiatek A."/>
            <person name="De Sutter V."/>
            <person name="Rischer H."/>
            <person name="Vanhoutte I."/>
            <person name="Van Onckelen H."/>
            <person name="Hilson P."/>
            <person name="Inze D."/>
            <person name="Oksman-Caldentey K.-M."/>
            <person name="Goossens A."/>
        </authorList>
    </citation>
    <scope>REVIEW</scope>
    <source>
        <tissue>Protoplast</tissue>
    </source>
</reference>
<reference key="8">
    <citation type="journal article" date="2013" name="Phytochemistry">
        <title>Molecular genetics of alkaloid biosynthesis in Nicotiana tabacum.</title>
        <authorList>
            <person name="Dewey R.E."/>
            <person name="Xie J."/>
        </authorList>
    </citation>
    <scope>REVIEW ON ALKALOID BIOSYNTHESIS IN NICOTIANA TABACUM</scope>
</reference>
<reference key="9">
    <citation type="journal article" date="2015" name="Mol. Genet. Genomics">
        <title>Current status and prospects for the study of Nicotiana genomics, genetics, and nicotine biosynthesis genes.</title>
        <authorList>
            <person name="Wang X."/>
            <person name="Bennetzen J.L."/>
        </authorList>
    </citation>
    <scope>REVIEW ON NICOTINE BIOSYNTHESIS</scope>
</reference>
<reference key="10">
    <citation type="journal article" date="2016" name="J. Exp. Bot.">
        <title>Effects of down-regulating ornithine decarboxylase upon putrescine-associated metabolism and growth in Nicotiana tabacum L.</title>
        <authorList>
            <person name="Dalton H.L."/>
            <person name="Blomstedt C.K."/>
            <person name="Neale A.D."/>
            <person name="Gleadow R."/>
            <person name="DeBoer K.D."/>
            <person name="Hamill J.D."/>
        </authorList>
    </citation>
    <scope>FUNCTION</scope>
    <scope>DISRUPTION PHENOTYPE</scope>
    <source>
        <strain>cv. SC58</strain>
    </source>
</reference>
<reference key="11">
    <citation type="journal article" date="2020" name="Planta">
        <title>Genetic attenuation of alkaloids and nicotine content in tobacco (Nicotiana tabacum).</title>
        <authorList>
            <person name="Hidalgo Martinez D."/>
            <person name="Payyavula R.S."/>
            <person name="Kudithipudi C."/>
            <person name="Shen Y."/>
            <person name="Xu D."/>
            <person name="Warek U."/>
            <person name="Strickland J.A."/>
            <person name="Melis A."/>
        </authorList>
    </citation>
    <scope>FUNCTION</scope>
    <scope>DISRUPTION PHENOTYPE</scope>
    <scope>PATHWAY</scope>
    <source>
        <strain>cv. K326-ALCS3</strain>
    </source>
</reference>
<evidence type="ECO:0000250" key="1">
    <source>
        <dbReference type="UniProtKB" id="O22616"/>
    </source>
</evidence>
<evidence type="ECO:0000250" key="2">
    <source>
        <dbReference type="UniProtKB" id="P00860"/>
    </source>
</evidence>
<evidence type="ECO:0000250" key="3">
    <source>
        <dbReference type="UniProtKB" id="P07805"/>
    </source>
</evidence>
<evidence type="ECO:0000250" key="4">
    <source>
        <dbReference type="UniProtKB" id="P11926"/>
    </source>
</evidence>
<evidence type="ECO:0000255" key="5"/>
<evidence type="ECO:0000269" key="6">
    <source>
    </source>
</evidence>
<evidence type="ECO:0000269" key="7">
    <source>
    </source>
</evidence>
<evidence type="ECO:0000269" key="8">
    <source>
    </source>
</evidence>
<evidence type="ECO:0000303" key="9">
    <source>
    </source>
</evidence>
<evidence type="ECO:0000303" key="10">
    <source>
    </source>
</evidence>
<evidence type="ECO:0000303" key="11">
    <source>
    </source>
</evidence>
<evidence type="ECO:0000303" key="12">
    <source ref="2"/>
</evidence>
<evidence type="ECO:0000303" key="13">
    <source ref="4"/>
</evidence>
<evidence type="ECO:0000303" key="14">
    <source ref="6"/>
</evidence>
<evidence type="ECO:0000305" key="15"/>
<organism>
    <name type="scientific">Nicotiana tabacum</name>
    <name type="common">Common tobacco</name>
    <dbReference type="NCBI Taxonomy" id="4097"/>
    <lineage>
        <taxon>Eukaryota</taxon>
        <taxon>Viridiplantae</taxon>
        <taxon>Streptophyta</taxon>
        <taxon>Embryophyta</taxon>
        <taxon>Tracheophyta</taxon>
        <taxon>Spermatophyta</taxon>
        <taxon>Magnoliopsida</taxon>
        <taxon>eudicotyledons</taxon>
        <taxon>Gunneridae</taxon>
        <taxon>Pentapetalae</taxon>
        <taxon>asterids</taxon>
        <taxon>lamiids</taxon>
        <taxon>Solanales</taxon>
        <taxon>Solanaceae</taxon>
        <taxon>Nicotianoideae</taxon>
        <taxon>Nicotianeae</taxon>
        <taxon>Nicotiana</taxon>
    </lineage>
</organism>